<comment type="function">
    <text evidence="1 2">ATPase required for the post-translational delivery of tail-anchored (TA) proteins to the endoplasmic reticulum. Recognizes and selectively binds the transmembrane domain of TA proteins in the cytosol. This complex then targets to the endoplasmic reticulum by membrane-bound receptors, where the tail-anchored protein is released for insertion. This process is regulated by ATP binding and hydrolysis. ATP binding drives the homodimer towards the closed dimer state, facilitating recognition of newly synthesized TA membrane proteins. ATP hydrolysis is required for insertion. Subsequently, the homodimer reverts towards the open dimer state, lowering its affinity for the membrane-bound receptor, and returning it to the cytosol to initiate a new round of targeting (By similarity). May be involved in insulin signaling.</text>
</comment>
<comment type="subunit">
    <text evidence="1">Homodimer.</text>
</comment>
<comment type="interaction">
    <interactant intactId="EBI-318697">
        <id>P30632</id>
    </interactant>
    <interactant intactId="EBI-320572">
        <id>Q19824</id>
        <label>cee-1</label>
    </interactant>
    <organismsDiffer>false</organismsDiffer>
    <experiments>3</experiments>
</comment>
<comment type="subcellular location">
    <subcellularLocation>
        <location evidence="1">Cytoplasm</location>
    </subcellularLocation>
    <subcellularLocation>
        <location evidence="1">Endoplasmic reticulum</location>
    </subcellularLocation>
</comment>
<comment type="similarity">
    <text evidence="1">Belongs to the arsA ATPase family.</text>
</comment>
<accession>P30632</accession>
<feature type="chain" id="PRO_0000152255" description="ATPase asna-1">
    <location>
        <begin position="1"/>
        <end position="342"/>
    </location>
</feature>
<feature type="active site" evidence="1">
    <location>
        <position position="55"/>
    </location>
</feature>
<feature type="binding site" evidence="1">
    <location>
        <begin position="26"/>
        <end position="33"/>
    </location>
    <ligand>
        <name>ATP</name>
        <dbReference type="ChEBI" id="CHEBI:30616"/>
    </ligand>
</feature>
<feature type="binding site" evidence="1">
    <location>
        <position position="243"/>
    </location>
    <ligand>
        <name>ATP</name>
        <dbReference type="ChEBI" id="CHEBI:30616"/>
    </ligand>
</feature>
<feature type="binding site" evidence="1">
    <location>
        <position position="270"/>
    </location>
    <ligand>
        <name>ATP</name>
        <dbReference type="ChEBI" id="CHEBI:30616"/>
    </ligand>
</feature>
<feature type="binding site" evidence="1">
    <location>
        <position position="285"/>
    </location>
    <ligand>
        <name>Zn(2+)</name>
        <dbReference type="ChEBI" id="CHEBI:29105"/>
        <note>ligand shared between dimeric partners</note>
    </ligand>
</feature>
<feature type="binding site" evidence="1">
    <location>
        <position position="288"/>
    </location>
    <ligand>
        <name>Zn(2+)</name>
        <dbReference type="ChEBI" id="CHEBI:29105"/>
        <note>ligand shared between dimeric partners</note>
    </ligand>
</feature>
<sequence>MSDQLEASIKNILEQKTLKWIFVGGKGGVGKTTCSCSLAAQLSKVRERVLLISTDPAHNISDAFSQKFTKTPTLVEGFKNLFAMEIDSNPNGEGVEMGNIEEMLQNAAQNEGGSGGFSMGKDFLQSFAGGLPGIDEAMSFGEMIKLIDSLDFDVVVFDTAPTGHTLRLLQFPTLLEKVFTKILSLQGMFGPMMNQFGGMFGMGGGSMNEMIEKMTTTLESVKKMNAQFKDPNCTTFVCVCIAEFLSLYETERLIQELSKQGIDTHNIIVNQLLFPDTDANGTVSCRKCASRQAIQSKYLTDIDELYEDFHVVKLPLLEAEVRGGPAILQFSERMVDPEANKN</sequence>
<evidence type="ECO:0000255" key="1">
    <source>
        <dbReference type="HAMAP-Rule" id="MF_03112"/>
    </source>
</evidence>
<evidence type="ECO:0000269" key="2">
    <source>
    </source>
</evidence>
<organism>
    <name type="scientific">Caenorhabditis elegans</name>
    <dbReference type="NCBI Taxonomy" id="6239"/>
    <lineage>
        <taxon>Eukaryota</taxon>
        <taxon>Metazoa</taxon>
        <taxon>Ecdysozoa</taxon>
        <taxon>Nematoda</taxon>
        <taxon>Chromadorea</taxon>
        <taxon>Rhabditida</taxon>
        <taxon>Rhabditina</taxon>
        <taxon>Rhabditomorpha</taxon>
        <taxon>Rhabditoidea</taxon>
        <taxon>Rhabditidae</taxon>
        <taxon>Peloderinae</taxon>
        <taxon>Caenorhabditis</taxon>
    </lineage>
</organism>
<reference key="1">
    <citation type="journal article" date="1992" name="Nature">
        <title>The C. elegans genome sequencing project: a beginning.</title>
        <authorList>
            <person name="Sulston J."/>
            <person name="Du Z."/>
            <person name="Thomas K."/>
            <person name="Wilson R."/>
            <person name="Hillier L."/>
            <person name="Staden R."/>
            <person name="Halloran N."/>
            <person name="Green P."/>
            <person name="Thierry-Mieg J."/>
            <person name="Qiu L."/>
            <person name="Dear S."/>
            <person name="Coulson A."/>
            <person name="Craxton M."/>
            <person name="Durbin R."/>
            <person name="Berks M."/>
            <person name="Metzstein M."/>
            <person name="Hawkins T."/>
            <person name="Ainscough R."/>
            <person name="Waterston R."/>
        </authorList>
    </citation>
    <scope>NUCLEOTIDE SEQUENCE [LARGE SCALE GENOMIC DNA]</scope>
    <source>
        <strain>Bristol N2</strain>
    </source>
</reference>
<reference key="2">
    <citation type="journal article" date="1998" name="Science">
        <title>Genome sequence of the nematode C. elegans: a platform for investigating biology.</title>
        <authorList>
            <consortium name="The C. elegans sequencing consortium"/>
        </authorList>
    </citation>
    <scope>NUCLEOTIDE SEQUENCE [LARGE SCALE GENOMIC DNA]</scope>
    <source>
        <strain>Bristol N2</strain>
    </source>
</reference>
<reference key="3">
    <citation type="journal article" date="2007" name="Cell">
        <title>ASNA-1 positively regulates insulin secretion in C. elegans and mammalian cells.</title>
        <authorList>
            <person name="Kao G."/>
            <person name="Nordenson C."/>
            <person name="Still M."/>
            <person name="Roennlund A."/>
            <person name="Tuck S."/>
            <person name="Naredi P."/>
        </authorList>
    </citation>
    <scope>FUNCTION</scope>
</reference>
<proteinExistence type="evidence at protein level"/>
<protein>
    <recommendedName>
        <fullName evidence="1">ATPase asna-1</fullName>
        <ecNumber evidence="1">3.6.-.-</ecNumber>
    </recommendedName>
    <alternativeName>
        <fullName evidence="1">Arsenical pump-driving ATPase</fullName>
    </alternativeName>
    <alternativeName>
        <fullName evidence="1">Arsenite-stimulated ATPase</fullName>
    </alternativeName>
</protein>
<name>ASNA_CAEEL</name>
<dbReference type="EC" id="3.6.-.-" evidence="1"/>
<dbReference type="EMBL" id="Z11115">
    <property type="protein sequence ID" value="CAA77452.1"/>
    <property type="molecule type" value="Genomic_DNA"/>
</dbReference>
<dbReference type="PIR" id="S15791">
    <property type="entry name" value="S15791"/>
</dbReference>
<dbReference type="RefSeq" id="NP_498965.1">
    <property type="nucleotide sequence ID" value="NM_066564.4"/>
</dbReference>
<dbReference type="SMR" id="P30632"/>
<dbReference type="BioGRID" id="41455">
    <property type="interactions" value="24"/>
</dbReference>
<dbReference type="DIP" id="DIP-26718N"/>
<dbReference type="FunCoup" id="P30632">
    <property type="interactions" value="2789"/>
</dbReference>
<dbReference type="IntAct" id="P30632">
    <property type="interactions" value="16"/>
</dbReference>
<dbReference type="STRING" id="6239.ZK637.5.1"/>
<dbReference type="PaxDb" id="6239-ZK637.5"/>
<dbReference type="PeptideAtlas" id="P30632"/>
<dbReference type="EnsemblMetazoa" id="ZK637.5.1">
    <property type="protein sequence ID" value="ZK637.5.1"/>
    <property type="gene ID" value="WBGene00014025"/>
</dbReference>
<dbReference type="GeneID" id="176254"/>
<dbReference type="KEGG" id="cel:CELE_ZK637.5"/>
<dbReference type="AGR" id="WB:WBGene00014025"/>
<dbReference type="CTD" id="176254"/>
<dbReference type="WormBase" id="ZK637.5">
    <property type="protein sequence ID" value="CE00436"/>
    <property type="gene ID" value="WBGene00014025"/>
    <property type="gene designation" value="asna-1"/>
</dbReference>
<dbReference type="eggNOG" id="KOG2825">
    <property type="taxonomic scope" value="Eukaryota"/>
</dbReference>
<dbReference type="GeneTree" id="ENSGT00390000003817"/>
<dbReference type="HOGENOM" id="CLU_040761_0_0_1"/>
<dbReference type="InParanoid" id="P30632"/>
<dbReference type="OMA" id="MDAPYEF"/>
<dbReference type="OrthoDB" id="1770at2759"/>
<dbReference type="PhylomeDB" id="P30632"/>
<dbReference type="BRENDA" id="7.3.2.7">
    <property type="organism ID" value="1045"/>
</dbReference>
<dbReference type="PRO" id="PR:P30632"/>
<dbReference type="Proteomes" id="UP000001940">
    <property type="component" value="Chromosome III"/>
</dbReference>
<dbReference type="Bgee" id="WBGene00014025">
    <property type="expression patterns" value="Expressed in pharyngeal muscle cell (C elegans) and 4 other cell types or tissues"/>
</dbReference>
<dbReference type="GO" id="GO:0030424">
    <property type="term" value="C:axon"/>
    <property type="evidence" value="ECO:0000314"/>
    <property type="project" value="WormBase"/>
</dbReference>
<dbReference type="GO" id="GO:0043529">
    <property type="term" value="C:GET complex"/>
    <property type="evidence" value="ECO:0000318"/>
    <property type="project" value="GO_Central"/>
</dbReference>
<dbReference type="GO" id="GO:0043025">
    <property type="term" value="C:neuronal cell body"/>
    <property type="evidence" value="ECO:0000314"/>
    <property type="project" value="WormBase"/>
</dbReference>
<dbReference type="GO" id="GO:0005524">
    <property type="term" value="F:ATP binding"/>
    <property type="evidence" value="ECO:0007669"/>
    <property type="project" value="UniProtKB-UniRule"/>
</dbReference>
<dbReference type="GO" id="GO:0016887">
    <property type="term" value="F:ATP hydrolysis activity"/>
    <property type="evidence" value="ECO:0000314"/>
    <property type="project" value="WormBase"/>
</dbReference>
<dbReference type="GO" id="GO:0046872">
    <property type="term" value="F:metal ion binding"/>
    <property type="evidence" value="ECO:0007669"/>
    <property type="project" value="UniProtKB-KW"/>
</dbReference>
<dbReference type="GO" id="GO:0071722">
    <property type="term" value="P:detoxification of arsenic-containing substance"/>
    <property type="evidence" value="ECO:0000315"/>
    <property type="project" value="WormBase"/>
</dbReference>
<dbReference type="GO" id="GO:0032024">
    <property type="term" value="P:positive regulation of insulin secretion"/>
    <property type="evidence" value="ECO:0000315"/>
    <property type="project" value="WormBase"/>
</dbReference>
<dbReference type="GO" id="GO:0071816">
    <property type="term" value="P:tail-anchored membrane protein insertion into ER membrane"/>
    <property type="evidence" value="ECO:0000250"/>
    <property type="project" value="WormBase"/>
</dbReference>
<dbReference type="CDD" id="cd02035">
    <property type="entry name" value="ArsA"/>
    <property type="match status" value="1"/>
</dbReference>
<dbReference type="FunFam" id="3.40.50.300:FF:000235">
    <property type="entry name" value="ATPase ASNA1"/>
    <property type="match status" value="1"/>
</dbReference>
<dbReference type="Gene3D" id="3.40.50.300">
    <property type="entry name" value="P-loop containing nucleotide triphosphate hydrolases"/>
    <property type="match status" value="1"/>
</dbReference>
<dbReference type="HAMAP" id="MF_03112">
    <property type="entry name" value="Asna1_Get3"/>
    <property type="match status" value="1"/>
</dbReference>
<dbReference type="InterPro" id="IPR025723">
    <property type="entry name" value="Anion-transp_ATPase-like_dom"/>
</dbReference>
<dbReference type="InterPro" id="IPR016300">
    <property type="entry name" value="ATPase_ArsA/GET3"/>
</dbReference>
<dbReference type="InterPro" id="IPR027542">
    <property type="entry name" value="ATPase_ArsA/GET3_euk"/>
</dbReference>
<dbReference type="InterPro" id="IPR027417">
    <property type="entry name" value="P-loop_NTPase"/>
</dbReference>
<dbReference type="NCBIfam" id="TIGR00345">
    <property type="entry name" value="GET3_arsA_TRC40"/>
    <property type="match status" value="1"/>
</dbReference>
<dbReference type="PANTHER" id="PTHR10803">
    <property type="entry name" value="ARSENICAL PUMP-DRIVING ATPASE ARSENITE-TRANSLOCATING ATPASE"/>
    <property type="match status" value="1"/>
</dbReference>
<dbReference type="PANTHER" id="PTHR10803:SF3">
    <property type="entry name" value="ATPASE GET3"/>
    <property type="match status" value="1"/>
</dbReference>
<dbReference type="Pfam" id="PF02374">
    <property type="entry name" value="ArsA_ATPase"/>
    <property type="match status" value="1"/>
</dbReference>
<dbReference type="SUPFAM" id="SSF52540">
    <property type="entry name" value="P-loop containing nucleoside triphosphate hydrolases"/>
    <property type="match status" value="1"/>
</dbReference>
<gene>
    <name evidence="1" type="primary">asna-1</name>
    <name type="synonym">tag-205</name>
    <name type="ORF">ZK637.5</name>
</gene>
<keyword id="KW-0067">ATP-binding</keyword>
<keyword id="KW-0963">Cytoplasm</keyword>
<keyword id="KW-0256">Endoplasmic reticulum</keyword>
<keyword id="KW-0378">Hydrolase</keyword>
<keyword id="KW-0479">Metal-binding</keyword>
<keyword id="KW-0547">Nucleotide-binding</keyword>
<keyword id="KW-1185">Reference proteome</keyword>
<keyword id="KW-0813">Transport</keyword>
<keyword id="KW-0862">Zinc</keyword>